<evidence type="ECO:0000255" key="1">
    <source>
        <dbReference type="HAMAP-Rule" id="MF_01825"/>
    </source>
</evidence>
<feature type="chain" id="PRO_0000297480" description="Erythronate-4-phosphate dehydrogenase">
    <location>
        <begin position="1"/>
        <end position="376"/>
    </location>
</feature>
<feature type="active site" evidence="1">
    <location>
        <position position="209"/>
    </location>
</feature>
<feature type="active site" evidence="1">
    <location>
        <position position="238"/>
    </location>
</feature>
<feature type="active site" description="Proton donor" evidence="1">
    <location>
        <position position="255"/>
    </location>
</feature>
<feature type="binding site" evidence="1">
    <location>
        <position position="45"/>
    </location>
    <ligand>
        <name>substrate</name>
    </ligand>
</feature>
<feature type="binding site" evidence="1">
    <location>
        <position position="67"/>
    </location>
    <ligand>
        <name>substrate</name>
    </ligand>
</feature>
<feature type="binding site" evidence="1">
    <location>
        <begin position="127"/>
        <end position="128"/>
    </location>
    <ligand>
        <name>NAD(+)</name>
        <dbReference type="ChEBI" id="CHEBI:57540"/>
    </ligand>
</feature>
<feature type="binding site" evidence="1">
    <location>
        <position position="147"/>
    </location>
    <ligand>
        <name>NAD(+)</name>
        <dbReference type="ChEBI" id="CHEBI:57540"/>
    </ligand>
</feature>
<feature type="binding site" evidence="1">
    <location>
        <position position="176"/>
    </location>
    <ligand>
        <name>NAD(+)</name>
        <dbReference type="ChEBI" id="CHEBI:57540"/>
    </ligand>
</feature>
<feature type="binding site" evidence="1">
    <location>
        <position position="233"/>
    </location>
    <ligand>
        <name>NAD(+)</name>
        <dbReference type="ChEBI" id="CHEBI:57540"/>
    </ligand>
</feature>
<feature type="binding site" evidence="1">
    <location>
        <position position="258"/>
    </location>
    <ligand>
        <name>NAD(+)</name>
        <dbReference type="ChEBI" id="CHEBI:57540"/>
    </ligand>
</feature>
<feature type="binding site" evidence="1">
    <location>
        <position position="259"/>
    </location>
    <ligand>
        <name>substrate</name>
    </ligand>
</feature>
<protein>
    <recommendedName>
        <fullName evidence="1">Erythronate-4-phosphate dehydrogenase</fullName>
        <ecNumber evidence="1">1.1.1.290</ecNumber>
    </recommendedName>
</protein>
<dbReference type="EC" id="1.1.1.290" evidence="1"/>
<dbReference type="EMBL" id="CP000020">
    <property type="protein sequence ID" value="AAW86194.1"/>
    <property type="molecule type" value="Genomic_DNA"/>
</dbReference>
<dbReference type="RefSeq" id="WP_011262254.1">
    <property type="nucleotide sequence ID" value="NC_006840.2"/>
</dbReference>
<dbReference type="RefSeq" id="YP_205082.1">
    <property type="nucleotide sequence ID" value="NC_006840.2"/>
</dbReference>
<dbReference type="SMR" id="Q5E452"/>
<dbReference type="STRING" id="312309.VF_1699"/>
<dbReference type="EnsemblBacteria" id="AAW86194">
    <property type="protein sequence ID" value="AAW86194"/>
    <property type="gene ID" value="VF_1699"/>
</dbReference>
<dbReference type="GeneID" id="54164394"/>
<dbReference type="KEGG" id="vfi:VF_1699"/>
<dbReference type="PATRIC" id="fig|312309.11.peg.1721"/>
<dbReference type="eggNOG" id="COG0111">
    <property type="taxonomic scope" value="Bacteria"/>
</dbReference>
<dbReference type="HOGENOM" id="CLU_019796_4_0_6"/>
<dbReference type="OrthoDB" id="9770208at2"/>
<dbReference type="UniPathway" id="UPA00244">
    <property type="reaction ID" value="UER00310"/>
</dbReference>
<dbReference type="Proteomes" id="UP000000537">
    <property type="component" value="Chromosome I"/>
</dbReference>
<dbReference type="GO" id="GO:0005737">
    <property type="term" value="C:cytoplasm"/>
    <property type="evidence" value="ECO:0007669"/>
    <property type="project" value="UniProtKB-SubCell"/>
</dbReference>
<dbReference type="GO" id="GO:0033711">
    <property type="term" value="F:4-phosphoerythronate dehydrogenase activity"/>
    <property type="evidence" value="ECO:0007669"/>
    <property type="project" value="UniProtKB-EC"/>
</dbReference>
<dbReference type="GO" id="GO:0051287">
    <property type="term" value="F:NAD binding"/>
    <property type="evidence" value="ECO:0007669"/>
    <property type="project" value="InterPro"/>
</dbReference>
<dbReference type="GO" id="GO:0046983">
    <property type="term" value="F:protein dimerization activity"/>
    <property type="evidence" value="ECO:0007669"/>
    <property type="project" value="InterPro"/>
</dbReference>
<dbReference type="GO" id="GO:0008615">
    <property type="term" value="P:pyridoxine biosynthetic process"/>
    <property type="evidence" value="ECO:0007669"/>
    <property type="project" value="UniProtKB-UniRule"/>
</dbReference>
<dbReference type="CDD" id="cd12158">
    <property type="entry name" value="ErythrP_dh"/>
    <property type="match status" value="1"/>
</dbReference>
<dbReference type="FunFam" id="3.40.50.720:FF:000093">
    <property type="entry name" value="Erythronate-4-phosphate dehydrogenase"/>
    <property type="match status" value="1"/>
</dbReference>
<dbReference type="Gene3D" id="3.30.1370.170">
    <property type="match status" value="1"/>
</dbReference>
<dbReference type="Gene3D" id="3.40.50.720">
    <property type="entry name" value="NAD(P)-binding Rossmann-like Domain"/>
    <property type="match status" value="2"/>
</dbReference>
<dbReference type="HAMAP" id="MF_01825">
    <property type="entry name" value="PdxB"/>
    <property type="match status" value="1"/>
</dbReference>
<dbReference type="InterPro" id="IPR050223">
    <property type="entry name" value="D-isomer_2-hydroxyacid_DH"/>
</dbReference>
<dbReference type="InterPro" id="IPR006139">
    <property type="entry name" value="D-isomer_2_OHA_DH_cat_dom"/>
</dbReference>
<dbReference type="InterPro" id="IPR029753">
    <property type="entry name" value="D-isomer_DH_CS"/>
</dbReference>
<dbReference type="InterPro" id="IPR006140">
    <property type="entry name" value="D-isomer_DH_NAD-bd"/>
</dbReference>
<dbReference type="InterPro" id="IPR020921">
    <property type="entry name" value="Erythronate-4-P_DHase"/>
</dbReference>
<dbReference type="InterPro" id="IPR024531">
    <property type="entry name" value="Erythronate-4-P_DHase_dimer"/>
</dbReference>
<dbReference type="InterPro" id="IPR036291">
    <property type="entry name" value="NAD(P)-bd_dom_sf"/>
</dbReference>
<dbReference type="InterPro" id="IPR038251">
    <property type="entry name" value="PdxB_dimer_sf"/>
</dbReference>
<dbReference type="PANTHER" id="PTHR10996">
    <property type="entry name" value="2-HYDROXYACID DEHYDROGENASE-RELATED"/>
    <property type="match status" value="1"/>
</dbReference>
<dbReference type="Pfam" id="PF00389">
    <property type="entry name" value="2-Hacid_dh"/>
    <property type="match status" value="1"/>
</dbReference>
<dbReference type="Pfam" id="PF02826">
    <property type="entry name" value="2-Hacid_dh_C"/>
    <property type="match status" value="1"/>
</dbReference>
<dbReference type="Pfam" id="PF11890">
    <property type="entry name" value="DUF3410"/>
    <property type="match status" value="1"/>
</dbReference>
<dbReference type="SUPFAM" id="SSF52283">
    <property type="entry name" value="Formate/glycerate dehydrogenase catalytic domain-like"/>
    <property type="match status" value="1"/>
</dbReference>
<dbReference type="SUPFAM" id="SSF51735">
    <property type="entry name" value="NAD(P)-binding Rossmann-fold domains"/>
    <property type="match status" value="1"/>
</dbReference>
<dbReference type="PROSITE" id="PS00671">
    <property type="entry name" value="D_2_HYDROXYACID_DH_3"/>
    <property type="match status" value="1"/>
</dbReference>
<comment type="function">
    <text evidence="1">Catalyzes the oxidation of erythronate-4-phosphate to 3-hydroxy-2-oxo-4-phosphonooxybutanoate.</text>
</comment>
<comment type="catalytic activity">
    <reaction evidence="1">
        <text>4-phospho-D-erythronate + NAD(+) = (R)-3-hydroxy-2-oxo-4-phosphooxybutanoate + NADH + H(+)</text>
        <dbReference type="Rhea" id="RHEA:18829"/>
        <dbReference type="ChEBI" id="CHEBI:15378"/>
        <dbReference type="ChEBI" id="CHEBI:57540"/>
        <dbReference type="ChEBI" id="CHEBI:57945"/>
        <dbReference type="ChEBI" id="CHEBI:58538"/>
        <dbReference type="ChEBI" id="CHEBI:58766"/>
        <dbReference type="EC" id="1.1.1.290"/>
    </reaction>
</comment>
<comment type="pathway">
    <text evidence="1">Cofactor biosynthesis; pyridoxine 5'-phosphate biosynthesis; pyridoxine 5'-phosphate from D-erythrose 4-phosphate: step 2/5.</text>
</comment>
<comment type="subunit">
    <text evidence="1">Homodimer.</text>
</comment>
<comment type="subcellular location">
    <subcellularLocation>
        <location evidence="1">Cytoplasm</location>
    </subcellularLocation>
</comment>
<comment type="similarity">
    <text evidence="1">Belongs to the D-isomer specific 2-hydroxyacid dehydrogenase family. PdxB subfamily.</text>
</comment>
<organism>
    <name type="scientific">Aliivibrio fischeri (strain ATCC 700601 / ES114)</name>
    <name type="common">Vibrio fischeri</name>
    <dbReference type="NCBI Taxonomy" id="312309"/>
    <lineage>
        <taxon>Bacteria</taxon>
        <taxon>Pseudomonadati</taxon>
        <taxon>Pseudomonadota</taxon>
        <taxon>Gammaproteobacteria</taxon>
        <taxon>Vibrionales</taxon>
        <taxon>Vibrionaceae</taxon>
        <taxon>Aliivibrio</taxon>
    </lineage>
</organism>
<gene>
    <name evidence="1" type="primary">pdxB</name>
    <name type="ordered locus">VF_1699</name>
</gene>
<proteinExistence type="inferred from homology"/>
<accession>Q5E452</accession>
<reference key="1">
    <citation type="journal article" date="2005" name="Proc. Natl. Acad. Sci. U.S.A.">
        <title>Complete genome sequence of Vibrio fischeri: a symbiotic bacterium with pathogenic congeners.</title>
        <authorList>
            <person name="Ruby E.G."/>
            <person name="Urbanowski M."/>
            <person name="Campbell J."/>
            <person name="Dunn A."/>
            <person name="Faini M."/>
            <person name="Gunsalus R."/>
            <person name="Lostroh P."/>
            <person name="Lupp C."/>
            <person name="McCann J."/>
            <person name="Millikan D."/>
            <person name="Schaefer A."/>
            <person name="Stabb E."/>
            <person name="Stevens A."/>
            <person name="Visick K."/>
            <person name="Whistler C."/>
            <person name="Greenberg E.P."/>
        </authorList>
    </citation>
    <scope>NUCLEOTIDE SEQUENCE [LARGE SCALE GENOMIC DNA]</scope>
    <source>
        <strain>ATCC 700601 / ES114</strain>
    </source>
</reference>
<keyword id="KW-0963">Cytoplasm</keyword>
<keyword id="KW-0520">NAD</keyword>
<keyword id="KW-0560">Oxidoreductase</keyword>
<keyword id="KW-0664">Pyridoxine biosynthesis</keyword>
<keyword id="KW-1185">Reference proteome</keyword>
<name>PDXB_ALIF1</name>
<sequence>MKILIDENMPYAAELFSGLGEVIAKSGRTLTADDLIDVDALMIRSVTKVNAELIEKANKLKFVGTATAGMDHVDQALLKEKGIFFTAAPGCNKVGVAEYVLSCLMVLAQQHGFSIFDKTFGIVGAGQVGSYLAQCLDALNISYLLNDPIKEQEGDSRSFVALDELLEKSDVITLHTPITRDGEYPTHHLIGQKTLSKLRNDQILINAARGPVVDNQALKQRLLKQDGFKAVLDVFEFEPDVDMELLPLLSFATPHIAGYGLEGKARGTTMIFNFYCEFLKRNERADPQTLLPIAPIPNVTLNQQWDHSTLHNLIQLVYDVRKDDAVFRKEIATVGAFDKMRKDYWDRREYSAITITGTQCCDLTPLQQLGFTIEEV</sequence>